<name>MTNA_HORVU</name>
<evidence type="ECO:0000255" key="1">
    <source>
        <dbReference type="HAMAP-Rule" id="MF_03119"/>
    </source>
</evidence>
<evidence type="ECO:0000269" key="2">
    <source>
    </source>
</evidence>
<keyword id="KW-0028">Amino-acid biosynthesis</keyword>
<keyword id="KW-0963">Cytoplasm</keyword>
<keyword id="KW-0413">Isomerase</keyword>
<keyword id="KW-0486">Methionine biosynthesis</keyword>
<keyword id="KW-0539">Nucleus</keyword>
<comment type="function">
    <text evidence="1">Catalyzes the interconversion of methylthioribose-1-phosphate (MTR-1-P) into methylthioribulose-1-phosphate (MTRu-1-P).</text>
</comment>
<comment type="catalytic activity">
    <reaction evidence="1">
        <text>5-(methylsulfanyl)-alpha-D-ribose 1-phosphate = 5-(methylsulfanyl)-D-ribulose 1-phosphate</text>
        <dbReference type="Rhea" id="RHEA:19989"/>
        <dbReference type="ChEBI" id="CHEBI:58533"/>
        <dbReference type="ChEBI" id="CHEBI:58548"/>
        <dbReference type="EC" id="5.3.1.23"/>
    </reaction>
</comment>
<comment type="pathway">
    <text evidence="1">Amino-acid biosynthesis; L-methionine biosynthesis via salvage pathway; L-methionine from S-methyl-5-thio-alpha-D-ribose 1-phosphate: step 1/6.</text>
</comment>
<comment type="subcellular location">
    <subcellularLocation>
        <location evidence="1">Cytoplasm</location>
    </subcellularLocation>
    <subcellularLocation>
        <location evidence="1">Nucleus</location>
    </subcellularLocation>
</comment>
<comment type="induction">
    <text evidence="2">By iron deficiency in roots.</text>
</comment>
<comment type="similarity">
    <text evidence="1">Belongs to the eIF-2B alpha/beta/delta subunits family. MtnA subfamily.</text>
</comment>
<sequence>MGESSALQSILYGRGALRLLDQRKLPLEEVYVDVKDSADGWNAIRDMVVRGAPAIAIAAALSLAVEVNDHNFIGTPAEAASFVSKKLEYLVSSRPTAVNLSDAATKLQNLVSTTAETAKDAKSIFQVFIEAAETMLVDDVADNKAIGLHGAEFLQRQLGSSKNISVLTHCNTGSLATAGYGTALGVIRALHSGGVLEKAFCTETRPFNQGSRLTAFELVHDKIPATLIADSAAAALMNNGQVQAVIVGADRIAANGDTANKIGTYNLSIAAKHHGVQFYVAAPVTSIDLSLPSGKQIVIEERSPKELLNSEGGLGKQVAASGISVWNPAFDVTPADLITAIITEKGVITKSDPDGTFDIKSFIECAK</sequence>
<organism>
    <name type="scientific">Hordeum vulgare</name>
    <name type="common">Barley</name>
    <dbReference type="NCBI Taxonomy" id="4513"/>
    <lineage>
        <taxon>Eukaryota</taxon>
        <taxon>Viridiplantae</taxon>
        <taxon>Streptophyta</taxon>
        <taxon>Embryophyta</taxon>
        <taxon>Tracheophyta</taxon>
        <taxon>Spermatophyta</taxon>
        <taxon>Magnoliopsida</taxon>
        <taxon>Liliopsida</taxon>
        <taxon>Poales</taxon>
        <taxon>Poaceae</taxon>
        <taxon>BOP clade</taxon>
        <taxon>Pooideae</taxon>
        <taxon>Triticodae</taxon>
        <taxon>Triticeae</taxon>
        <taxon>Hordeinae</taxon>
        <taxon>Hordeum</taxon>
    </lineage>
</organism>
<reference key="1">
    <citation type="journal article" date="2000" name="J. Exp. Bot.">
        <title>Isolation and characterization of IDI2, a new Fe-deficiency-induced cDNA from barley roots, which encodes a protein related to the alpha subunit of eukaryotic initiation factor 2B (eIF2Balpha).</title>
        <authorList>
            <person name="Yamaguchi H."/>
            <person name="Nakanishi H."/>
            <person name="Nishizawa N.K."/>
            <person name="Mori S."/>
        </authorList>
    </citation>
    <scope>NUCLEOTIDE SEQUENCE [MRNA]</scope>
    <scope>INDUCTION</scope>
    <source>
        <strain>cv. Ehimehadaka No.1</strain>
        <tissue>Root</tissue>
    </source>
</reference>
<feature type="chain" id="PRO_0000401990" description="Methylthioribose-1-phosphate isomerase">
    <location>
        <begin position="1"/>
        <end position="367"/>
    </location>
</feature>
<feature type="active site" description="Proton donor" evidence="1">
    <location>
        <position position="250"/>
    </location>
</feature>
<feature type="site" description="Transition state stabilizer" evidence="1">
    <location>
        <position position="170"/>
    </location>
</feature>
<protein>
    <recommendedName>
        <fullName evidence="1">Methylthioribose-1-phosphate isomerase</fullName>
        <shortName evidence="1">M1Pi</shortName>
        <shortName evidence="1">MTR-1-P isomerase</shortName>
        <ecNumber evidence="1">5.3.1.23</ecNumber>
    </recommendedName>
    <alternativeName>
        <fullName>Protein IRON DEFICIENCY INDUCIBLE 2</fullName>
        <shortName>HvIDI2</shortName>
    </alternativeName>
    <alternativeName>
        <fullName evidence="1">S-methyl-5-thioribose-1-phosphate isomerase</fullName>
    </alternativeName>
    <alternativeName>
        <fullName evidence="1">Translation initiation factor eIF-2B subunit alpha/beta/delta-like protein</fullName>
    </alternativeName>
</protein>
<dbReference type="EC" id="5.3.1.23" evidence="1"/>
<dbReference type="EMBL" id="AB038775">
    <property type="protein sequence ID" value="BAB21393.1"/>
    <property type="molecule type" value="mRNA"/>
</dbReference>
<dbReference type="SMR" id="Q9AYT7"/>
<dbReference type="UniPathway" id="UPA00904">
    <property type="reaction ID" value="UER00874"/>
</dbReference>
<dbReference type="ExpressionAtlas" id="Q9AYT7">
    <property type="expression patterns" value="baseline and differential"/>
</dbReference>
<dbReference type="GO" id="GO:0005737">
    <property type="term" value="C:cytoplasm"/>
    <property type="evidence" value="ECO:0007669"/>
    <property type="project" value="UniProtKB-SubCell"/>
</dbReference>
<dbReference type="GO" id="GO:0005634">
    <property type="term" value="C:nucleus"/>
    <property type="evidence" value="ECO:0007669"/>
    <property type="project" value="UniProtKB-SubCell"/>
</dbReference>
<dbReference type="GO" id="GO:0046523">
    <property type="term" value="F:S-methyl-5-thioribose-1-phosphate isomerase activity"/>
    <property type="evidence" value="ECO:0007669"/>
    <property type="project" value="UniProtKB-UniRule"/>
</dbReference>
<dbReference type="GO" id="GO:0019509">
    <property type="term" value="P:L-methionine salvage from methylthioadenosine"/>
    <property type="evidence" value="ECO:0007669"/>
    <property type="project" value="UniProtKB-UniRule"/>
</dbReference>
<dbReference type="FunFam" id="1.20.120.420:FF:000002">
    <property type="entry name" value="Methylthioribose-1-phosphate isomerase"/>
    <property type="match status" value="1"/>
</dbReference>
<dbReference type="FunFam" id="3.40.50.10470:FF:000003">
    <property type="entry name" value="Methylthioribose-1-phosphate isomerase"/>
    <property type="match status" value="1"/>
</dbReference>
<dbReference type="Gene3D" id="1.20.120.420">
    <property type="entry name" value="translation initiation factor eif-2b, domain 1"/>
    <property type="match status" value="1"/>
</dbReference>
<dbReference type="Gene3D" id="3.40.50.10470">
    <property type="entry name" value="Translation initiation factor eif-2b, domain 2"/>
    <property type="match status" value="1"/>
</dbReference>
<dbReference type="HAMAP" id="MF_01678">
    <property type="entry name" value="Salvage_MtnA"/>
    <property type="match status" value="1"/>
</dbReference>
<dbReference type="InterPro" id="IPR000649">
    <property type="entry name" value="IF-2B-related"/>
</dbReference>
<dbReference type="InterPro" id="IPR005251">
    <property type="entry name" value="IF-M1Pi"/>
</dbReference>
<dbReference type="InterPro" id="IPR042529">
    <property type="entry name" value="IF_2B-like_C"/>
</dbReference>
<dbReference type="InterPro" id="IPR011559">
    <property type="entry name" value="Initiation_fac_2B_a/b/d"/>
</dbReference>
<dbReference type="InterPro" id="IPR027363">
    <property type="entry name" value="M1Pi_N"/>
</dbReference>
<dbReference type="InterPro" id="IPR037171">
    <property type="entry name" value="NagB/RpiA_transferase-like"/>
</dbReference>
<dbReference type="NCBIfam" id="TIGR00524">
    <property type="entry name" value="eIF-2B_rel"/>
    <property type="match status" value="1"/>
</dbReference>
<dbReference type="NCBIfam" id="NF004326">
    <property type="entry name" value="PRK05720.1"/>
    <property type="match status" value="1"/>
</dbReference>
<dbReference type="NCBIfam" id="TIGR00512">
    <property type="entry name" value="salvage_mtnA"/>
    <property type="match status" value="1"/>
</dbReference>
<dbReference type="PANTHER" id="PTHR43475">
    <property type="entry name" value="METHYLTHIORIBOSE-1-PHOSPHATE ISOMERASE"/>
    <property type="match status" value="1"/>
</dbReference>
<dbReference type="PANTHER" id="PTHR43475:SF1">
    <property type="entry name" value="METHYLTHIORIBOSE-1-PHOSPHATE ISOMERASE"/>
    <property type="match status" value="1"/>
</dbReference>
<dbReference type="Pfam" id="PF01008">
    <property type="entry name" value="IF-2B"/>
    <property type="match status" value="1"/>
</dbReference>
<dbReference type="SUPFAM" id="SSF100950">
    <property type="entry name" value="NagB/RpiA/CoA transferase-like"/>
    <property type="match status" value="1"/>
</dbReference>
<accession>Q9AYT7</accession>
<proteinExistence type="evidence at transcript level"/>
<gene>
    <name type="primary">IDI2</name>
</gene>